<comment type="function">
    <text evidence="1 2 4 5">Transcriptional regulator that represses the expression of the lsr operon (lsrACDBFGE) in the absence of the quorum-sensing signaling molecule autoinducer 2 (AI-2) (PubMed:11722742, PubMed:14622426, PubMed:20628367). It also represses the expression of the lsrRK operon (PubMed:20628367). Acts by binding to the intergenic region between the lsr operon and lsrR (PubMed:20628367). In the presence of phosphorylated autoinducer-2 (phospho-AI-2), LsrR is inactivated, leading to the transcription of the genes (PubMed:14622426). The regulatory function of LsrR was thought to be limited to the lsr operon, but it was subsequently shown to be involved, directly or indirectly, in the regulation of SPI-1 and flagella genes (PubMed:22623980). It negatively regulates the expression of those genes, which reduces the ability of Salmonella to invade host cells (PubMed:22623980).</text>
</comment>
<comment type="activity regulation">
    <text evidence="2 3">Inactivated by phosphorylated autoinducer-2 (phospho-AI-2) (PubMed:14622426, PubMed:17274596). Phospho-AI-2 acts by binding to LsrR, which is then unable to bind to the promoter regions, allowing the transcription of the target genes (PubMed:17274596).</text>
</comment>
<comment type="subcellular location">
    <subcellularLocation>
        <location evidence="8">Cytoplasm</location>
    </subcellularLocation>
</comment>
<comment type="induction">
    <text evidence="4">Autorepressed.</text>
</comment>
<comment type="disruption phenotype">
    <text evidence="1 4">The deletion mutant displays completely derepressed expression of the lsr operon (PubMed:11722742, PubMed:20628367). The mutant imports AI-2 faster than the wild-type strain because of high-level production of the Lsr transport apparatus (PubMed:11722742). The lsrK and further downstream-located STM4071 genes are also up-regulated in the mutant (PubMed:20628367).</text>
</comment>
<comment type="similarity">
    <text evidence="8">Belongs to the SorC transcriptional regulatory family.</text>
</comment>
<evidence type="ECO:0000269" key="1">
    <source>
    </source>
</evidence>
<evidence type="ECO:0000269" key="2">
    <source>
    </source>
</evidence>
<evidence type="ECO:0000269" key="3">
    <source>
    </source>
</evidence>
<evidence type="ECO:0000269" key="4">
    <source>
    </source>
</evidence>
<evidence type="ECO:0000269" key="5">
    <source>
    </source>
</evidence>
<evidence type="ECO:0000303" key="6">
    <source>
    </source>
</evidence>
<evidence type="ECO:0000303" key="7">
    <source>
    </source>
</evidence>
<evidence type="ECO:0000305" key="8"/>
<keyword id="KW-0963">Cytoplasm</keyword>
<keyword id="KW-0238">DNA-binding</keyword>
<keyword id="KW-1185">Reference proteome</keyword>
<keyword id="KW-0678">Repressor</keyword>
<keyword id="KW-0804">Transcription</keyword>
<keyword id="KW-0805">Transcription regulation</keyword>
<organism>
    <name type="scientific">Salmonella typhimurium (strain LT2 / SGSC1412 / ATCC 700720)</name>
    <dbReference type="NCBI Taxonomy" id="99287"/>
    <lineage>
        <taxon>Bacteria</taxon>
        <taxon>Pseudomonadati</taxon>
        <taxon>Pseudomonadota</taxon>
        <taxon>Gammaproteobacteria</taxon>
        <taxon>Enterobacterales</taxon>
        <taxon>Enterobacteriaceae</taxon>
        <taxon>Salmonella</taxon>
    </lineage>
</organism>
<name>LSRR_SALTY</name>
<sequence length="319" mass="34450">MSDNTLVSDYGMCEEEQVARIAWFYYHDGLTQSEISERLGLTRLKVSRLLEKGHQSGIIRVQINSRFEGCLEYENALRNHFALQNIRVLPALPDADIGLRLGIGAAHMLMESLRPQQLLAVGFGEATMTTLKRLSGFISAQQIRLVTLSGGVGPYMTGIGQLDAACSVSIMPAPLRASSQEIACTLRNENSVRDVMLTAQAADAAIVGIGAINQKDQASILKSGYITQGEQLMIGRKGAVGDILGYFFDAHGEIIPDIKIHNELIGLKLNSLSTIPTVIGVAGGEQKAEAIIAAMRGNYINALVTDQKTAGKIIQIIEK</sequence>
<feature type="chain" id="PRO_0000351623" description="Transcriptional regulator LsrR">
    <location>
        <begin position="1"/>
        <end position="319"/>
    </location>
</feature>
<feature type="DNA-binding region" description="H-T-H motif" evidence="8">
    <location>
        <begin position="32"/>
        <end position="55"/>
    </location>
</feature>
<dbReference type="EMBL" id="AE006468">
    <property type="protein sequence ID" value="AAL22913.1"/>
    <property type="molecule type" value="Genomic_DNA"/>
</dbReference>
<dbReference type="RefSeq" id="WP_001283048.1">
    <property type="nucleotide sequence ID" value="NC_003197.2"/>
</dbReference>
<dbReference type="SMR" id="Q8ZKQ5"/>
<dbReference type="STRING" id="99287.STM4073"/>
<dbReference type="PaxDb" id="99287-STM4073"/>
<dbReference type="KEGG" id="stm:STM4073"/>
<dbReference type="PATRIC" id="fig|99287.12.peg.4293"/>
<dbReference type="HOGENOM" id="CLU_054506_0_1_6"/>
<dbReference type="OMA" id="WGRSTIH"/>
<dbReference type="PhylomeDB" id="Q8ZKQ5"/>
<dbReference type="BioCyc" id="SENT99287:STM4073-MONOMER"/>
<dbReference type="Proteomes" id="UP000001014">
    <property type="component" value="Chromosome"/>
</dbReference>
<dbReference type="GO" id="GO:0005737">
    <property type="term" value="C:cytoplasm"/>
    <property type="evidence" value="ECO:0007669"/>
    <property type="project" value="UniProtKB-SubCell"/>
</dbReference>
<dbReference type="GO" id="GO:0030246">
    <property type="term" value="F:carbohydrate binding"/>
    <property type="evidence" value="ECO:0007669"/>
    <property type="project" value="InterPro"/>
</dbReference>
<dbReference type="GO" id="GO:0000987">
    <property type="term" value="F:cis-regulatory region sequence-specific DNA binding"/>
    <property type="evidence" value="ECO:0000318"/>
    <property type="project" value="GO_Central"/>
</dbReference>
<dbReference type="GO" id="GO:2000142">
    <property type="term" value="P:regulation of DNA-templated transcription initiation"/>
    <property type="evidence" value="ECO:0000318"/>
    <property type="project" value="GO_Central"/>
</dbReference>
<dbReference type="FunFam" id="1.10.10.10:FF:000195">
    <property type="entry name" value="LsrR family transcriptional regulator"/>
    <property type="match status" value="1"/>
</dbReference>
<dbReference type="Gene3D" id="3.40.50.1360">
    <property type="match status" value="1"/>
</dbReference>
<dbReference type="Gene3D" id="1.10.10.10">
    <property type="entry name" value="Winged helix-like DNA-binding domain superfamily/Winged helix DNA-binding domain"/>
    <property type="match status" value="1"/>
</dbReference>
<dbReference type="InterPro" id="IPR037171">
    <property type="entry name" value="NagB/RpiA_transferase-like"/>
</dbReference>
<dbReference type="InterPro" id="IPR051054">
    <property type="entry name" value="SorC_transcr_regulators"/>
</dbReference>
<dbReference type="InterPro" id="IPR007324">
    <property type="entry name" value="Sugar-bd_dom_put"/>
</dbReference>
<dbReference type="InterPro" id="IPR036388">
    <property type="entry name" value="WH-like_DNA-bd_sf"/>
</dbReference>
<dbReference type="NCBIfam" id="NF011947">
    <property type="entry name" value="PRK15418.1"/>
    <property type="match status" value="1"/>
</dbReference>
<dbReference type="PANTHER" id="PTHR34294:SF1">
    <property type="entry name" value="TRANSCRIPTIONAL REGULATOR LSRR"/>
    <property type="match status" value="1"/>
</dbReference>
<dbReference type="PANTHER" id="PTHR34294">
    <property type="entry name" value="TRANSCRIPTIONAL REGULATOR-RELATED"/>
    <property type="match status" value="1"/>
</dbReference>
<dbReference type="Pfam" id="PF04198">
    <property type="entry name" value="Sugar-bind"/>
    <property type="match status" value="1"/>
</dbReference>
<dbReference type="SUPFAM" id="SSF100950">
    <property type="entry name" value="NagB/RpiA/CoA transferase-like"/>
    <property type="match status" value="1"/>
</dbReference>
<gene>
    <name evidence="6" type="primary">lsrR</name>
    <name type="ordered locus">STM4073</name>
</gene>
<reference key="1">
    <citation type="journal article" date="2001" name="Nature">
        <title>Complete genome sequence of Salmonella enterica serovar Typhimurium LT2.</title>
        <authorList>
            <person name="McClelland M."/>
            <person name="Sanderson K.E."/>
            <person name="Spieth J."/>
            <person name="Clifton S.W."/>
            <person name="Latreille P."/>
            <person name="Courtney L."/>
            <person name="Porwollik S."/>
            <person name="Ali J."/>
            <person name="Dante M."/>
            <person name="Du F."/>
            <person name="Hou S."/>
            <person name="Layman D."/>
            <person name="Leonard S."/>
            <person name="Nguyen C."/>
            <person name="Scott K."/>
            <person name="Holmes A."/>
            <person name="Grewal N."/>
            <person name="Mulvaney E."/>
            <person name="Ryan E."/>
            <person name="Sun H."/>
            <person name="Florea L."/>
            <person name="Miller W."/>
            <person name="Stoneking T."/>
            <person name="Nhan M."/>
            <person name="Waterston R."/>
            <person name="Wilson R.K."/>
        </authorList>
    </citation>
    <scope>NUCLEOTIDE SEQUENCE [LARGE SCALE GENOMIC DNA]</scope>
    <source>
        <strain>LT2 / SGSC1412 / ATCC 700720</strain>
    </source>
</reference>
<reference key="2">
    <citation type="journal article" date="2001" name="Mol. Microbiol.">
        <title>The LuxS-dependent autoinducer AI-2 controls the expression of an ABC transporter that functions in AI-2 uptake in Salmonella typhimurium.</title>
        <authorList>
            <person name="Taga M.E."/>
            <person name="Semmelhack J.L."/>
            <person name="Bassler B.L."/>
        </authorList>
    </citation>
    <scope>FUNCTION AS A TRANSCRIPTIONAL REGULATOR</scope>
    <scope>DISRUPTION PHENOTYPE</scope>
    <source>
        <strain>ATCC 14028 / SGSG 2980 / CDC 6516-60 / NCTC 12023</strain>
    </source>
</reference>
<reference key="3">
    <citation type="journal article" date="2003" name="Mol. Microbiol.">
        <title>Lsr-mediated transport and processing of AI-2 in Salmonella typhimurium.</title>
        <authorList>
            <person name="Taga M.E."/>
            <person name="Miller S.T."/>
            <person name="Bassler B.L."/>
        </authorList>
    </citation>
    <scope>FUNCTION AS A TRANSCRIPTIONAL REGULATOR</scope>
    <scope>ACTIVITY REGULATION</scope>
    <source>
        <strain>ATCC 14028 / SGSG 2980 / CDC 6516-60 / NCTC 12023</strain>
    </source>
</reference>
<reference key="4">
    <citation type="journal article" date="2007" name="ACS Chem. Biol.">
        <title>Phosphorylation and processing of the quorum-sensing molecule autoinducer-2 in enteric bacteria.</title>
        <authorList>
            <person name="Xavier K.B."/>
            <person name="Miller S.T."/>
            <person name="Lu W."/>
            <person name="Kim J.H."/>
            <person name="Rabinowitz J."/>
            <person name="Pelczer I."/>
            <person name="Semmelhack M.F."/>
            <person name="Bassler B.L."/>
        </authorList>
    </citation>
    <scope>ACTIVITY REGULATION</scope>
    <scope>BINDING TO PHOSPHO-AI-2</scope>
</reference>
<reference key="5">
    <citation type="journal article" date="2010" name="Cell Res.">
        <title>The AI-2-dependent regulator LsrR has a limited regulon in Salmonella Typhimurium.</title>
        <authorList>
            <person name="Thijs I.M."/>
            <person name="Zhao H."/>
            <person name="De Weerdt A."/>
            <person name="Engelen K."/>
            <person name="De Coster D."/>
            <person name="Schoofs G."/>
            <person name="McClelland M."/>
            <person name="Vanderleyden J."/>
            <person name="Marchal K."/>
            <person name="De Keersmaecker S.C."/>
        </authorList>
    </citation>
    <scope>FUNCTION</scope>
    <scope>DNA-BINDING</scope>
    <scope>INDUCTION</scope>
    <scope>DISRUPTION PHENOTYPE</scope>
</reference>
<reference key="6">
    <citation type="journal article" date="2012" name="PLoS ONE">
        <title>LsrR-mediated quorum sensing controls invasiveness of Salmonella typhimurium by regulating SPI-1 and flagella genes.</title>
        <authorList>
            <person name="Choi J."/>
            <person name="Shin D."/>
            <person name="Kim M."/>
            <person name="Park J."/>
            <person name="Lim S."/>
            <person name="Ryu S."/>
        </authorList>
    </citation>
    <scope>FUNCTION</scope>
    <source>
        <strain>SL1344</strain>
    </source>
</reference>
<protein>
    <recommendedName>
        <fullName evidence="8">Transcriptional regulator LsrR</fullName>
    </recommendedName>
    <alternativeName>
        <fullName evidence="7">AI-2-dependent regulator LsrR</fullName>
    </alternativeName>
    <alternativeName>
        <fullName evidence="6">Regulator of the lsr operon</fullName>
    </alternativeName>
</protein>
<proteinExistence type="evidence at protein level"/>
<accession>Q8ZKQ5</accession>